<accession>P25175</accession>
<evidence type="ECO:0000255" key="1"/>
<evidence type="ECO:0000255" key="2">
    <source>
        <dbReference type="HAMAP-Rule" id="MF_04131"/>
    </source>
</evidence>
<evidence type="ECO:0000305" key="3"/>
<proteinExistence type="inferred from homology"/>
<reference key="1">
    <citation type="journal article" date="1991" name="J. Virol.">
        <title>Comparative amino acid sequence analysis of VP4 for VP7 serotype 6 bovine rotavirus strains NCDV, B641, and UK.</title>
        <authorList>
            <person name="Hardy M.E."/>
            <person name="Woode G.N."/>
            <person name="Xu Z."/>
            <person name="Gorziglia M."/>
        </authorList>
    </citation>
    <scope>NUCLEOTIDE SEQUENCE [GENOMIC RNA]</scope>
</reference>
<comment type="function">
    <text evidence="2">Calcium-binding protein that interacts with rotavirus cell receptors once the initial attachment by VP4 has been achieved. Rotavirus attachment and entry into the host cell probably involves multiple sequential contacts between the outer capsid proteins VP4 and VP7, and the cell receptors. Following entry into the host cell, low intracellular or intravesicular Ca(2+) concentration probably causes the calcium-stabilized VP7 trimers to dissociate from the virion. This step is probably necessary for the membrane-disrupting entry step and the release of VP4, which is locked onto the virion by VP7.</text>
</comment>
<comment type="subunit">
    <text evidence="2">Homotrimer; disulfide-linked. 2 Ca(2+) ions bound at each subunit interface in the trimer hold the trimer together. Interacts with the intermediate capsid protein VP6. Interacts with the outer capsid protein VP5*.</text>
</comment>
<comment type="subcellular location">
    <subcellularLocation>
        <location evidence="2">Virion</location>
    </subcellularLocation>
    <subcellularLocation>
        <location evidence="2">Host endoplasmic reticulum lumen</location>
    </subcellularLocation>
    <text evidence="2">The outer layer contains 780 copies of VP7, grouped as 260 trimers. Immature double-layered particles assembled in the cytoplasm bud across the membrane of the endoplasmic reticulum, acquiring during this process a transient lipid membrane that is modified with the ER resident viral glycoproteins NSP4 and VP7; these enveloped particles also contain VP4. As the particles move towards the interior of the ER cisternae, the transient lipid membrane and the non-structural protein NSP4 are lost, while the virus surface proteins VP4 and VP7 rearrange to form the outermost virus protein layer, yielding mature infectious triple-layered particles.</text>
</comment>
<comment type="alternative products">
    <event type="alternative initiation"/>
    <isoform>
        <id>P25175-1</id>
        <name>1</name>
        <sequence type="displayed"/>
    </isoform>
    <isoform>
        <id>P25175-2</id>
        <name>2</name>
        <sequence type="described" ref="VSP_038613"/>
    </isoform>
</comment>
<comment type="PTM">
    <text evidence="2">N-glycosylated.</text>
</comment>
<comment type="PTM">
    <text evidence="2">The N-terminus is blocked possibly by pyroglutamic acid.</text>
</comment>
<comment type="miscellaneous">
    <text evidence="2">Some rotavirus strains are neuraminidase-sensitive and require sialic acid to attach to the cell surface. Some rotavirus strains are integrin-dependent. Some rotavirus strains depend on ganglioside for their entry into the host cell. Hsp70 also seems to be involved in the entry of some strains.</text>
</comment>
<comment type="miscellaneous">
    <text evidence="2">In group A rotaviruses, VP7 defines the G serotype.</text>
</comment>
<comment type="miscellaneous">
    <molecule>Isoform 2</molecule>
    <text evidence="3">Produced by alternative initiation at Met-30 of isoform 1.</text>
</comment>
<comment type="similarity">
    <text evidence="2">Belongs to the rotavirus VP7 family.</text>
</comment>
<feature type="signal peptide" evidence="2">
    <location>
        <begin position="1"/>
        <end position="50"/>
    </location>
</feature>
<feature type="chain" id="PRO_0000149578" description="Outer capsid glycoprotein VP7" evidence="2">
    <location>
        <begin position="51"/>
        <end position="326"/>
    </location>
</feature>
<feature type="region of interest" description="CNP motif; interaction with ITGAV/ITGB3" evidence="2">
    <location>
        <begin position="165"/>
        <end position="167"/>
    </location>
</feature>
<feature type="region of interest" description="GPR motif; interaction with ITGAX/ITGB2" evidence="2">
    <location>
        <begin position="253"/>
        <end position="255"/>
    </location>
</feature>
<feature type="binding site" evidence="2">
    <location>
        <position position="95"/>
    </location>
    <ligand>
        <name>Ca(2+)</name>
        <dbReference type="ChEBI" id="CHEBI:29108"/>
        <label>1</label>
    </ligand>
</feature>
<feature type="binding site" evidence="2">
    <location>
        <position position="177"/>
    </location>
    <ligand>
        <name>Ca(2+)</name>
        <dbReference type="ChEBI" id="CHEBI:29108"/>
        <label>2</label>
    </ligand>
</feature>
<feature type="binding site" evidence="2">
    <location>
        <position position="206"/>
    </location>
    <ligand>
        <name>Ca(2+)</name>
        <dbReference type="ChEBI" id="CHEBI:29108"/>
        <label>1</label>
    </ligand>
</feature>
<feature type="binding site" evidence="2">
    <location>
        <position position="214"/>
    </location>
    <ligand>
        <name>Ca(2+)</name>
        <dbReference type="ChEBI" id="CHEBI:29108"/>
        <label>1</label>
    </ligand>
</feature>
<feature type="binding site" evidence="2">
    <location>
        <position position="216"/>
    </location>
    <ligand>
        <name>Ca(2+)</name>
        <dbReference type="ChEBI" id="CHEBI:29108"/>
        <label>1</label>
    </ligand>
</feature>
<feature type="binding site" evidence="2">
    <location>
        <position position="228"/>
    </location>
    <ligand>
        <name>Ca(2+)</name>
        <dbReference type="ChEBI" id="CHEBI:29108"/>
        <label>2</label>
    </ligand>
</feature>
<feature type="binding site" evidence="2">
    <location>
        <position position="229"/>
    </location>
    <ligand>
        <name>Ca(2+)</name>
        <dbReference type="ChEBI" id="CHEBI:29108"/>
        <label>2</label>
    </ligand>
</feature>
<feature type="binding site" evidence="2">
    <location>
        <position position="231"/>
    </location>
    <ligand>
        <name>Ca(2+)</name>
        <dbReference type="ChEBI" id="CHEBI:29108"/>
        <label>2</label>
    </ligand>
</feature>
<feature type="binding site" evidence="2">
    <location>
        <position position="301"/>
    </location>
    <ligand>
        <name>Ca(2+)</name>
        <dbReference type="ChEBI" id="CHEBI:29108"/>
        <label>2</label>
    </ligand>
</feature>
<feature type="glycosylation site" description="N-linked (GlcNAc...) asparagine; by host" evidence="1">
    <location>
        <position position="69"/>
    </location>
</feature>
<feature type="glycosylation site" description="N-linked (GlcNAc...) asparagine; by host" evidence="1">
    <location>
        <position position="238"/>
    </location>
</feature>
<feature type="glycosylation site" description="N-linked (GlcNAc...) asparagine; by host" evidence="1">
    <location>
        <position position="318"/>
    </location>
</feature>
<feature type="disulfide bond" evidence="2">
    <location>
        <begin position="82"/>
        <end position="135"/>
    </location>
</feature>
<feature type="disulfide bond" evidence="2">
    <location>
        <begin position="165"/>
        <end position="249"/>
    </location>
</feature>
<feature type="disulfide bond" evidence="2">
    <location>
        <begin position="191"/>
        <end position="244"/>
    </location>
</feature>
<feature type="disulfide bond" evidence="2">
    <location>
        <begin position="196"/>
        <end position="207"/>
    </location>
</feature>
<feature type="splice variant" id="VSP_038613" description="In isoform 2." evidence="3">
    <location>
        <begin position="1"/>
        <end position="29"/>
    </location>
</feature>
<organismHost>
    <name type="scientific">Bos taurus</name>
    <name type="common">Bovine</name>
    <dbReference type="NCBI Taxonomy" id="9913"/>
</organismHost>
<dbReference type="EMBL" id="M63266">
    <property type="protein sequence ID" value="AAA47324.1"/>
    <property type="molecule type" value="Genomic_RNA"/>
</dbReference>
<dbReference type="SMR" id="P25175"/>
<dbReference type="GO" id="GO:0044166">
    <property type="term" value="C:host cell endoplasmic reticulum lumen"/>
    <property type="evidence" value="ECO:0007669"/>
    <property type="project" value="UniProtKB-SubCell"/>
</dbReference>
<dbReference type="GO" id="GO:0039621">
    <property type="term" value="C:T=13 icosahedral viral capsid"/>
    <property type="evidence" value="ECO:0007669"/>
    <property type="project" value="UniProtKB-UniRule"/>
</dbReference>
<dbReference type="GO" id="GO:0039624">
    <property type="term" value="C:viral outer capsid"/>
    <property type="evidence" value="ECO:0007669"/>
    <property type="project" value="UniProtKB-UniRule"/>
</dbReference>
<dbReference type="GO" id="GO:0046872">
    <property type="term" value="F:metal ion binding"/>
    <property type="evidence" value="ECO:0007669"/>
    <property type="project" value="UniProtKB-KW"/>
</dbReference>
<dbReference type="Gene3D" id="3.40.50.11130">
    <property type="entry name" value="Glycoprotein VP7, domain 1"/>
    <property type="match status" value="1"/>
</dbReference>
<dbReference type="Gene3D" id="2.60.120.800">
    <property type="entry name" value="Rotavirus outer-layer protein VP7, domain 2"/>
    <property type="match status" value="1"/>
</dbReference>
<dbReference type="HAMAP" id="MF_04130">
    <property type="entry name" value="Rota_VP7"/>
    <property type="match status" value="1"/>
</dbReference>
<dbReference type="HAMAP" id="MF_04131">
    <property type="entry name" value="Rota_VP7_A"/>
    <property type="match status" value="1"/>
</dbReference>
<dbReference type="InterPro" id="IPR001963">
    <property type="entry name" value="VP7"/>
</dbReference>
<dbReference type="InterPro" id="IPR042207">
    <property type="entry name" value="VP7_1"/>
</dbReference>
<dbReference type="InterPro" id="IPR042210">
    <property type="entry name" value="VP7_2"/>
</dbReference>
<dbReference type="Pfam" id="PF00434">
    <property type="entry name" value="VP7"/>
    <property type="match status" value="1"/>
</dbReference>
<sequence>MYGIEYTTILIFLTSITLLNYTLKSITRIMDYIIYRFLLIVAILATIMNAQNYGVNLPITGSMDTAYANSTQSEPFLTSTLCLYYPVEASNEMADTEWKDTLSQLFLTKGWPTGSVYFKEYTDIAAFSVEPQLYCDYNLVLMKYDSTQKLDMSELADLILNEWLCNPMDITLYYYQQTDEANKWISMGSSCTVKVCPLNTQTLGIGCLITNPDTFETVATTEKLVITDVVDGVNHKLNVTTATCTIRNCKKLGPRENVAVIQVGGANILDITADPTTTPQTERMMRINWKKWWQVFYTVVDYVNQIIQTMSKRSRSLNSSAFYYRV</sequence>
<keyword id="KW-0024">Alternative initiation</keyword>
<keyword id="KW-0106">Calcium</keyword>
<keyword id="KW-0167">Capsid protein</keyword>
<keyword id="KW-1015">Disulfide bond</keyword>
<keyword id="KW-0325">Glycoprotein</keyword>
<keyword id="KW-1038">Host endoplasmic reticulum</keyword>
<keyword id="KW-0945">Host-virus interaction</keyword>
<keyword id="KW-0479">Metal-binding</keyword>
<keyword id="KW-1152">Outer capsid protein</keyword>
<keyword id="KW-0732">Signal</keyword>
<keyword id="KW-1146">T=13 icosahedral capsid protein</keyword>
<keyword id="KW-0946">Virion</keyword>
<name>VP7_ROTB4</name>
<protein>
    <recommendedName>
        <fullName evidence="2">Outer capsid glycoprotein VP7</fullName>
    </recommendedName>
</protein>
<organism>
    <name type="scientific">Rotavirus A (strain RVA/Cow/United States/B641/XXXX/G6P7[5])</name>
    <name type="common">RV-A</name>
    <dbReference type="NCBI Taxonomy" id="10928"/>
    <lineage>
        <taxon>Viruses</taxon>
        <taxon>Riboviria</taxon>
        <taxon>Orthornavirae</taxon>
        <taxon>Duplornaviricota</taxon>
        <taxon>Resentoviricetes</taxon>
        <taxon>Reovirales</taxon>
        <taxon>Sedoreoviridae</taxon>
        <taxon>Rotavirus</taxon>
        <taxon>Rotavirus A</taxon>
    </lineage>
</organism>